<comment type="function">
    <text evidence="1">May be involved in environmental stress response.</text>
</comment>
<comment type="induction">
    <text evidence="4">By dehydration and salt stress.</text>
</comment>
<organism>
    <name type="scientific">Oryza sativa subsp. japonica</name>
    <name type="common">Rice</name>
    <dbReference type="NCBI Taxonomy" id="39947"/>
    <lineage>
        <taxon>Eukaryota</taxon>
        <taxon>Viridiplantae</taxon>
        <taxon>Streptophyta</taxon>
        <taxon>Embryophyta</taxon>
        <taxon>Tracheophyta</taxon>
        <taxon>Spermatophyta</taxon>
        <taxon>Magnoliopsida</taxon>
        <taxon>Liliopsida</taxon>
        <taxon>Poales</taxon>
        <taxon>Poaceae</taxon>
        <taxon>BOP clade</taxon>
        <taxon>Oryzoideae</taxon>
        <taxon>Oryzeae</taxon>
        <taxon>Oryzinae</taxon>
        <taxon>Oryza</taxon>
        <taxon>Oryza sativa</taxon>
    </lineage>
</organism>
<reference key="1">
    <citation type="journal article" date="2005" name="Nature">
        <title>The map-based sequence of the rice genome.</title>
        <authorList>
            <consortium name="International rice genome sequencing project (IRGSP)"/>
        </authorList>
    </citation>
    <scope>NUCLEOTIDE SEQUENCE [LARGE SCALE GENOMIC DNA]</scope>
    <source>
        <strain>cv. Nipponbare</strain>
    </source>
</reference>
<reference key="2">
    <citation type="journal article" date="2008" name="Nucleic Acids Res.">
        <title>The rice annotation project database (RAP-DB): 2008 update.</title>
        <authorList>
            <consortium name="The rice annotation project (RAP)"/>
        </authorList>
    </citation>
    <scope>GENOME REANNOTATION</scope>
    <source>
        <strain>cv. Nipponbare</strain>
    </source>
</reference>
<reference key="3">
    <citation type="journal article" date="2013" name="Rice">
        <title>Improvement of the Oryza sativa Nipponbare reference genome using next generation sequence and optical map data.</title>
        <authorList>
            <person name="Kawahara Y."/>
            <person name="de la Bastide M."/>
            <person name="Hamilton J.P."/>
            <person name="Kanamori H."/>
            <person name="McCombie W.R."/>
            <person name="Ouyang S."/>
            <person name="Schwartz D.C."/>
            <person name="Tanaka T."/>
            <person name="Wu J."/>
            <person name="Zhou S."/>
            <person name="Childs K.L."/>
            <person name="Davidson R.M."/>
            <person name="Lin H."/>
            <person name="Quesada-Ocampo L."/>
            <person name="Vaillancourt B."/>
            <person name="Sakai H."/>
            <person name="Lee S.S."/>
            <person name="Kim J."/>
            <person name="Numa H."/>
            <person name="Itoh T."/>
            <person name="Buell C.R."/>
            <person name="Matsumoto T."/>
        </authorList>
    </citation>
    <scope>GENOME REANNOTATION</scope>
    <source>
        <strain>cv. Nipponbare</strain>
    </source>
</reference>
<reference key="4">
    <citation type="journal article" date="2005" name="PLoS Biol.">
        <title>The genomes of Oryza sativa: a history of duplications.</title>
        <authorList>
            <person name="Yu J."/>
            <person name="Wang J."/>
            <person name="Lin W."/>
            <person name="Li S."/>
            <person name="Li H."/>
            <person name="Zhou J."/>
            <person name="Ni P."/>
            <person name="Dong W."/>
            <person name="Hu S."/>
            <person name="Zeng C."/>
            <person name="Zhang J."/>
            <person name="Zhang Y."/>
            <person name="Li R."/>
            <person name="Xu Z."/>
            <person name="Li S."/>
            <person name="Li X."/>
            <person name="Zheng H."/>
            <person name="Cong L."/>
            <person name="Lin L."/>
            <person name="Yin J."/>
            <person name="Geng J."/>
            <person name="Li G."/>
            <person name="Shi J."/>
            <person name="Liu J."/>
            <person name="Lv H."/>
            <person name="Li J."/>
            <person name="Wang J."/>
            <person name="Deng Y."/>
            <person name="Ran L."/>
            <person name="Shi X."/>
            <person name="Wang X."/>
            <person name="Wu Q."/>
            <person name="Li C."/>
            <person name="Ren X."/>
            <person name="Wang J."/>
            <person name="Wang X."/>
            <person name="Li D."/>
            <person name="Liu D."/>
            <person name="Zhang X."/>
            <person name="Ji Z."/>
            <person name="Zhao W."/>
            <person name="Sun Y."/>
            <person name="Zhang Z."/>
            <person name="Bao J."/>
            <person name="Han Y."/>
            <person name="Dong L."/>
            <person name="Ji J."/>
            <person name="Chen P."/>
            <person name="Wu S."/>
            <person name="Liu J."/>
            <person name="Xiao Y."/>
            <person name="Bu D."/>
            <person name="Tan J."/>
            <person name="Yang L."/>
            <person name="Ye C."/>
            <person name="Zhang J."/>
            <person name="Xu J."/>
            <person name="Zhou Y."/>
            <person name="Yu Y."/>
            <person name="Zhang B."/>
            <person name="Zhuang S."/>
            <person name="Wei H."/>
            <person name="Liu B."/>
            <person name="Lei M."/>
            <person name="Yu H."/>
            <person name="Li Y."/>
            <person name="Xu H."/>
            <person name="Wei S."/>
            <person name="He X."/>
            <person name="Fang L."/>
            <person name="Zhang Z."/>
            <person name="Zhang Y."/>
            <person name="Huang X."/>
            <person name="Su Z."/>
            <person name="Tong W."/>
            <person name="Li J."/>
            <person name="Tong Z."/>
            <person name="Li S."/>
            <person name="Ye J."/>
            <person name="Wang L."/>
            <person name="Fang L."/>
            <person name="Lei T."/>
            <person name="Chen C.-S."/>
            <person name="Chen H.-C."/>
            <person name="Xu Z."/>
            <person name="Li H."/>
            <person name="Huang H."/>
            <person name="Zhang F."/>
            <person name="Xu H."/>
            <person name="Li N."/>
            <person name="Zhao C."/>
            <person name="Li S."/>
            <person name="Dong L."/>
            <person name="Huang Y."/>
            <person name="Li L."/>
            <person name="Xi Y."/>
            <person name="Qi Q."/>
            <person name="Li W."/>
            <person name="Zhang B."/>
            <person name="Hu W."/>
            <person name="Zhang Y."/>
            <person name="Tian X."/>
            <person name="Jiao Y."/>
            <person name="Liang X."/>
            <person name="Jin J."/>
            <person name="Gao L."/>
            <person name="Zheng W."/>
            <person name="Hao B."/>
            <person name="Liu S.-M."/>
            <person name="Wang W."/>
            <person name="Yuan L."/>
            <person name="Cao M."/>
            <person name="McDermott J."/>
            <person name="Samudrala R."/>
            <person name="Wang J."/>
            <person name="Wong G.K.-S."/>
            <person name="Yang H."/>
        </authorList>
    </citation>
    <scope>NUCLEOTIDE SEQUENCE [LARGE SCALE GENOMIC DNA]</scope>
    <source>
        <strain>cv. Nipponbare</strain>
    </source>
</reference>
<reference key="5">
    <citation type="journal article" date="2003" name="Science">
        <title>Collection, mapping, and annotation of over 28,000 cDNA clones from japonica rice.</title>
        <authorList>
            <consortium name="The rice full-length cDNA consortium"/>
        </authorList>
    </citation>
    <scope>NUCLEOTIDE SEQUENCE [LARGE SCALE MRNA]</scope>
    <source>
        <strain>cv. Nipponbare</strain>
    </source>
</reference>
<reference key="6">
    <citation type="journal article" date="2006" name="Mol. Genet. Genomics">
        <title>Genome-wide analysis of the stress associated protein (SAP) gene family containing A20/AN1 zinc-finger(s) in rice and their phylogenetic relationship with Arabidopsis.</title>
        <authorList>
            <person name="Vij S."/>
            <person name="Tyagi A.K."/>
        </authorList>
    </citation>
    <scope>GENE FAMILY</scope>
    <scope>INDUCTION</scope>
</reference>
<dbReference type="EMBL" id="AP004790">
    <property type="protein sequence ID" value="BAD25445.1"/>
    <property type="molecule type" value="Genomic_DNA"/>
</dbReference>
<dbReference type="EMBL" id="AP008208">
    <property type="protein sequence ID" value="BAF08933.1"/>
    <property type="molecule type" value="Genomic_DNA"/>
</dbReference>
<dbReference type="EMBL" id="AP014958">
    <property type="protein sequence ID" value="BAS79028.1"/>
    <property type="molecule type" value="Genomic_DNA"/>
</dbReference>
<dbReference type="EMBL" id="CM000139">
    <property type="protein sequence ID" value="EAZ23299.1"/>
    <property type="molecule type" value="Genomic_DNA"/>
</dbReference>
<dbReference type="EMBL" id="AK063708">
    <property type="protein sequence ID" value="BAG88836.1"/>
    <property type="molecule type" value="mRNA"/>
</dbReference>
<dbReference type="RefSeq" id="XP_015623732.1">
    <property type="nucleotide sequence ID" value="XM_015768246.1"/>
</dbReference>
<dbReference type="SMR" id="Q6H754"/>
<dbReference type="FunCoup" id="Q6H754">
    <property type="interactions" value="1"/>
</dbReference>
<dbReference type="STRING" id="39947.Q6H754"/>
<dbReference type="PaxDb" id="39947-Q6H754"/>
<dbReference type="EnsemblPlants" id="Os02t0530300-01">
    <property type="protein sequence ID" value="Os02t0530300-01"/>
    <property type="gene ID" value="Os02g0530300"/>
</dbReference>
<dbReference type="Gramene" id="Os02t0530300-01">
    <property type="protein sequence ID" value="Os02t0530300-01"/>
    <property type="gene ID" value="Os02g0530300"/>
</dbReference>
<dbReference type="KEGG" id="dosa:Os02g0530300"/>
<dbReference type="eggNOG" id="KOG3173">
    <property type="taxonomic scope" value="Eukaryota"/>
</dbReference>
<dbReference type="HOGENOM" id="CLU_057016_5_3_1"/>
<dbReference type="InParanoid" id="Q6H754"/>
<dbReference type="OMA" id="PATQNFC"/>
<dbReference type="OrthoDB" id="428577at2759"/>
<dbReference type="Proteomes" id="UP000000763">
    <property type="component" value="Chromosome 2"/>
</dbReference>
<dbReference type="Proteomes" id="UP000007752">
    <property type="component" value="Chromosome 2"/>
</dbReference>
<dbReference type="Proteomes" id="UP000059680">
    <property type="component" value="Chromosome 2"/>
</dbReference>
<dbReference type="GO" id="GO:0003677">
    <property type="term" value="F:DNA binding"/>
    <property type="evidence" value="ECO:0007669"/>
    <property type="project" value="InterPro"/>
</dbReference>
<dbReference type="GO" id="GO:0008270">
    <property type="term" value="F:zinc ion binding"/>
    <property type="evidence" value="ECO:0007669"/>
    <property type="project" value="UniProtKB-KW"/>
</dbReference>
<dbReference type="FunFam" id="4.10.1110.10:FF:000001">
    <property type="entry name" value="Zinc finger AN1-type containing 6"/>
    <property type="match status" value="1"/>
</dbReference>
<dbReference type="Gene3D" id="1.20.5.4770">
    <property type="match status" value="1"/>
</dbReference>
<dbReference type="Gene3D" id="4.10.1110.10">
    <property type="entry name" value="AN1-like Zinc finger"/>
    <property type="match status" value="1"/>
</dbReference>
<dbReference type="InterPro" id="IPR035896">
    <property type="entry name" value="AN1-like_Znf"/>
</dbReference>
<dbReference type="InterPro" id="IPR050652">
    <property type="entry name" value="AN1_A20_ZnFinger"/>
</dbReference>
<dbReference type="InterPro" id="IPR002653">
    <property type="entry name" value="Znf_A20"/>
</dbReference>
<dbReference type="InterPro" id="IPR000058">
    <property type="entry name" value="Znf_AN1"/>
</dbReference>
<dbReference type="PANTHER" id="PTHR10634">
    <property type="entry name" value="AN1-TYPE ZINC FINGER PROTEIN"/>
    <property type="match status" value="1"/>
</dbReference>
<dbReference type="PANTHER" id="PTHR10634:SF67">
    <property type="entry name" value="AN1-TYPE ZINC FINGER PROTEIN 3"/>
    <property type="match status" value="1"/>
</dbReference>
<dbReference type="Pfam" id="PF01754">
    <property type="entry name" value="zf-A20"/>
    <property type="match status" value="1"/>
</dbReference>
<dbReference type="Pfam" id="PF01428">
    <property type="entry name" value="zf-AN1"/>
    <property type="match status" value="1"/>
</dbReference>
<dbReference type="SMART" id="SM00259">
    <property type="entry name" value="ZnF_A20"/>
    <property type="match status" value="1"/>
</dbReference>
<dbReference type="SMART" id="SM00154">
    <property type="entry name" value="ZnF_AN1"/>
    <property type="match status" value="1"/>
</dbReference>
<dbReference type="SUPFAM" id="SSF118310">
    <property type="entry name" value="AN1-like Zinc finger"/>
    <property type="match status" value="1"/>
</dbReference>
<dbReference type="SUPFAM" id="SSF57716">
    <property type="entry name" value="Glucocorticoid receptor-like (DNA-binding domain)"/>
    <property type="match status" value="1"/>
</dbReference>
<dbReference type="PROSITE" id="PS51036">
    <property type="entry name" value="ZF_A20"/>
    <property type="match status" value="1"/>
</dbReference>
<dbReference type="PROSITE" id="PS51039">
    <property type="entry name" value="ZF_AN1"/>
    <property type="match status" value="1"/>
</dbReference>
<name>SAP5_ORYSJ</name>
<protein>
    <recommendedName>
        <fullName>Zinc finger A20 and AN1 domain-containing stress-associated protein 5</fullName>
        <shortName>OsSAP5</shortName>
    </recommendedName>
</protein>
<proteinExistence type="evidence at transcript level"/>
<feature type="chain" id="PRO_0000269868" description="Zinc finger A20 and AN1 domain-containing stress-associated protein 5">
    <location>
        <begin position="1"/>
        <end position="154"/>
    </location>
</feature>
<feature type="zinc finger region" description="A20-type" evidence="3">
    <location>
        <begin position="9"/>
        <end position="43"/>
    </location>
</feature>
<feature type="zinc finger region" description="AN1-type" evidence="2">
    <location>
        <begin position="88"/>
        <end position="134"/>
    </location>
</feature>
<feature type="binding site" evidence="3">
    <location>
        <position position="15"/>
    </location>
    <ligand>
        <name>Zn(2+)</name>
        <dbReference type="ChEBI" id="CHEBI:29105"/>
        <label>1</label>
    </ligand>
</feature>
<feature type="binding site" evidence="3">
    <location>
        <position position="19"/>
    </location>
    <ligand>
        <name>Zn(2+)</name>
        <dbReference type="ChEBI" id="CHEBI:29105"/>
        <label>1</label>
    </ligand>
</feature>
<feature type="binding site" evidence="3">
    <location>
        <position position="31"/>
    </location>
    <ligand>
        <name>Zn(2+)</name>
        <dbReference type="ChEBI" id="CHEBI:29105"/>
        <label>1</label>
    </ligand>
</feature>
<feature type="binding site" evidence="3">
    <location>
        <position position="34"/>
    </location>
    <ligand>
        <name>Zn(2+)</name>
        <dbReference type="ChEBI" id="CHEBI:29105"/>
        <label>1</label>
    </ligand>
</feature>
<feature type="binding site" evidence="2">
    <location>
        <position position="94"/>
    </location>
    <ligand>
        <name>Zn(2+)</name>
        <dbReference type="ChEBI" id="CHEBI:29105"/>
        <label>2</label>
    </ligand>
</feature>
<feature type="binding site" evidence="2">
    <location>
        <position position="97"/>
    </location>
    <ligand>
        <name>Zn(2+)</name>
        <dbReference type="ChEBI" id="CHEBI:29105"/>
        <label>2</label>
    </ligand>
</feature>
<feature type="binding site" evidence="2">
    <location>
        <position position="108"/>
    </location>
    <ligand>
        <name>Zn(2+)</name>
        <dbReference type="ChEBI" id="CHEBI:29105"/>
        <label>3</label>
    </ligand>
</feature>
<feature type="binding site" evidence="2">
    <location>
        <position position="110"/>
    </location>
    <ligand>
        <name>Zn(2+)</name>
        <dbReference type="ChEBI" id="CHEBI:29105"/>
        <label>3</label>
    </ligand>
</feature>
<feature type="binding site" evidence="2">
    <location>
        <position position="115"/>
    </location>
    <ligand>
        <name>Zn(2+)</name>
        <dbReference type="ChEBI" id="CHEBI:29105"/>
        <label>2</label>
    </ligand>
</feature>
<feature type="binding site" evidence="2">
    <location>
        <position position="118"/>
    </location>
    <ligand>
        <name>Zn(2+)</name>
        <dbReference type="ChEBI" id="CHEBI:29105"/>
        <label>2</label>
    </ligand>
</feature>
<feature type="binding site" evidence="2">
    <location>
        <position position="124"/>
    </location>
    <ligand>
        <name>Zn(2+)</name>
        <dbReference type="ChEBI" id="CHEBI:29105"/>
        <label>3</label>
    </ligand>
</feature>
<feature type="binding site" evidence="2">
    <location>
        <position position="126"/>
    </location>
    <ligand>
        <name>Zn(2+)</name>
        <dbReference type="ChEBI" id="CHEBI:29105"/>
        <label>3</label>
    </ligand>
</feature>
<sequence length="154" mass="16114">MAEEQRWQEGCHRLCANNCGFFGSPATLDLCSKCYRDRQGRESTAPVVVAAAASACPATHPSSPSSSSCPAFLPSSTAAEAGVVVAAVAKASRCASCRKRVGLTGFACRCGGTFCGAHRYPERHACGFDFKAAGRDAIARANPLIKGDKLKDKI</sequence>
<gene>
    <name type="primary">SAP5</name>
    <name type="ordered locus">Os02g0530300</name>
    <name type="ordered locus">LOC_Os02g32840</name>
    <name evidence="5" type="ORF">OsJ_06995</name>
    <name type="ORF">P0476H10.31</name>
</gene>
<evidence type="ECO:0000250" key="1"/>
<evidence type="ECO:0000255" key="2">
    <source>
        <dbReference type="PROSITE-ProRule" id="PRU00449"/>
    </source>
</evidence>
<evidence type="ECO:0000255" key="3">
    <source>
        <dbReference type="PROSITE-ProRule" id="PRU00451"/>
    </source>
</evidence>
<evidence type="ECO:0000269" key="4">
    <source>
    </source>
</evidence>
<evidence type="ECO:0000312" key="5">
    <source>
        <dbReference type="EMBL" id="EAZ23299.1"/>
    </source>
</evidence>
<keyword id="KW-0479">Metal-binding</keyword>
<keyword id="KW-1185">Reference proteome</keyword>
<keyword id="KW-0346">Stress response</keyword>
<keyword id="KW-0862">Zinc</keyword>
<keyword id="KW-0863">Zinc-finger</keyword>
<accession>Q6H754</accession>
<accession>A3A7L0</accession>